<gene>
    <name evidence="1" type="primary">fbp</name>
    <name type="ordered locus">CV_2427</name>
</gene>
<protein>
    <recommendedName>
        <fullName evidence="1">Fructose-1,6-bisphosphatase class 1</fullName>
        <shortName evidence="1">FBPase class 1</shortName>
        <ecNumber evidence="1">3.1.3.11</ecNumber>
    </recommendedName>
    <alternativeName>
        <fullName evidence="1">D-fructose-1,6-bisphosphate 1-phosphohydrolase class 1</fullName>
    </alternativeName>
</protein>
<proteinExistence type="inferred from homology"/>
<name>F16PA_CHRVO</name>
<keyword id="KW-0119">Carbohydrate metabolism</keyword>
<keyword id="KW-0963">Cytoplasm</keyword>
<keyword id="KW-0378">Hydrolase</keyword>
<keyword id="KW-0460">Magnesium</keyword>
<keyword id="KW-0479">Metal-binding</keyword>
<keyword id="KW-1185">Reference proteome</keyword>
<sequence>MSRITLSRFLIEQQRKAGTLPPELRLLIETVGRACKAISYSVNKGALADVLGEAGTGNIQGEAQKKLDVIANDFLLDANEWGGSLAAMASEEMELPYHIPGEYPKGEYLLMFDPLDGSSNIDVNISVGTIFSILRCPEGVTQPTETDFLQPGTHQVAAGYTVYGPQTMLVLTFGSGVHGFTLDREHGSFVLTHPDMKVPERTAEFAINMSNMRHWEAPVRRYVEEMLAGKTGPRGRDFNMRWVASMVAEVHRIITRGGIFMYPKDARDPSKAGKLRLMYEGNPMAFIIEQAGGAATNGHQRILDIVPTKLHERVAVFLGSKEEVELVTRYHSEQQ</sequence>
<feature type="chain" id="PRO_0000364527" description="Fructose-1,6-bisphosphatase class 1">
    <location>
        <begin position="1"/>
        <end position="335"/>
    </location>
</feature>
<feature type="binding site" evidence="1">
    <location>
        <position position="91"/>
    </location>
    <ligand>
        <name>Mg(2+)</name>
        <dbReference type="ChEBI" id="CHEBI:18420"/>
        <label>1</label>
    </ligand>
</feature>
<feature type="binding site" evidence="1">
    <location>
        <position position="113"/>
    </location>
    <ligand>
        <name>Mg(2+)</name>
        <dbReference type="ChEBI" id="CHEBI:18420"/>
        <label>1</label>
    </ligand>
</feature>
<feature type="binding site" evidence="1">
    <location>
        <position position="113"/>
    </location>
    <ligand>
        <name>Mg(2+)</name>
        <dbReference type="ChEBI" id="CHEBI:18420"/>
        <label>2</label>
    </ligand>
</feature>
<feature type="binding site" evidence="1">
    <location>
        <position position="115"/>
    </location>
    <ligand>
        <name>Mg(2+)</name>
        <dbReference type="ChEBI" id="CHEBI:18420"/>
        <label>1</label>
    </ligand>
</feature>
<feature type="binding site" evidence="1">
    <location>
        <begin position="116"/>
        <end position="119"/>
    </location>
    <ligand>
        <name>substrate</name>
    </ligand>
</feature>
<feature type="binding site" evidence="1">
    <location>
        <position position="116"/>
    </location>
    <ligand>
        <name>Mg(2+)</name>
        <dbReference type="ChEBI" id="CHEBI:18420"/>
        <label>2</label>
    </ligand>
</feature>
<feature type="binding site" evidence="1">
    <location>
        <position position="208"/>
    </location>
    <ligand>
        <name>substrate</name>
    </ligand>
</feature>
<feature type="binding site" evidence="1">
    <location>
        <position position="274"/>
    </location>
    <ligand>
        <name>substrate</name>
    </ligand>
</feature>
<feature type="binding site" evidence="1">
    <location>
        <position position="280"/>
    </location>
    <ligand>
        <name>Mg(2+)</name>
        <dbReference type="ChEBI" id="CHEBI:18420"/>
        <label>2</label>
    </ligand>
</feature>
<organism>
    <name type="scientific">Chromobacterium violaceum (strain ATCC 12472 / DSM 30191 / JCM 1249 / CCUG 213 / NBRC 12614 / NCIMB 9131 / NCTC 9757 / MK)</name>
    <dbReference type="NCBI Taxonomy" id="243365"/>
    <lineage>
        <taxon>Bacteria</taxon>
        <taxon>Pseudomonadati</taxon>
        <taxon>Pseudomonadota</taxon>
        <taxon>Betaproteobacteria</taxon>
        <taxon>Neisseriales</taxon>
        <taxon>Chromobacteriaceae</taxon>
        <taxon>Chromobacterium</taxon>
    </lineage>
</organism>
<reference key="1">
    <citation type="journal article" date="2003" name="Proc. Natl. Acad. Sci. U.S.A.">
        <title>The complete genome sequence of Chromobacterium violaceum reveals remarkable and exploitable bacterial adaptability.</title>
        <authorList>
            <person name="Vasconcelos A.T.R."/>
            <person name="de Almeida D.F."/>
            <person name="Hungria M."/>
            <person name="Guimaraes C.T."/>
            <person name="Antonio R.V."/>
            <person name="Almeida F.C."/>
            <person name="de Almeida L.G.P."/>
            <person name="de Almeida R."/>
            <person name="Alves-Gomes J.A."/>
            <person name="Andrade E.M."/>
            <person name="Araripe J."/>
            <person name="de Araujo M.F.F."/>
            <person name="Astolfi-Filho S."/>
            <person name="Azevedo V."/>
            <person name="Baptista A.J."/>
            <person name="Bataus L.A.M."/>
            <person name="Batista J.S."/>
            <person name="Belo A."/>
            <person name="van den Berg C."/>
            <person name="Bogo M."/>
            <person name="Bonatto S."/>
            <person name="Bordignon J."/>
            <person name="Brigido M.M."/>
            <person name="Brito C.A."/>
            <person name="Brocchi M."/>
            <person name="Burity H.A."/>
            <person name="Camargo A.A."/>
            <person name="Cardoso D.D.P."/>
            <person name="Carneiro N.P."/>
            <person name="Carraro D.M."/>
            <person name="Carvalho C.M.B."/>
            <person name="Cascardo J.C.M."/>
            <person name="Cavada B.S."/>
            <person name="Chueire L.M.O."/>
            <person name="Creczynski-Pasa T.B."/>
            <person name="Cunha-Junior N.C."/>
            <person name="Fagundes N."/>
            <person name="Falcao C.L."/>
            <person name="Fantinatti F."/>
            <person name="Farias I.P."/>
            <person name="Felipe M.S.S."/>
            <person name="Ferrari L.P."/>
            <person name="Ferro J.A."/>
            <person name="Ferro M.I.T."/>
            <person name="Franco G.R."/>
            <person name="Freitas N.S.A."/>
            <person name="Furlan L.R."/>
            <person name="Gazzinelli R.T."/>
            <person name="Gomes E.A."/>
            <person name="Goncalves P.R."/>
            <person name="Grangeiro T.B."/>
            <person name="Grattapaglia D."/>
            <person name="Grisard E.C."/>
            <person name="Hanna E.S."/>
            <person name="Jardim S.N."/>
            <person name="Laurino J."/>
            <person name="Leoi L.C.T."/>
            <person name="Lima L.F.A."/>
            <person name="Loureiro M.F."/>
            <person name="Lyra M.C.C.P."/>
            <person name="Madeira H.M.F."/>
            <person name="Manfio G.P."/>
            <person name="Maranhao A.Q."/>
            <person name="Martins W.S."/>
            <person name="di Mauro S.M.Z."/>
            <person name="de Medeiros S.R.B."/>
            <person name="Meissner R.V."/>
            <person name="Moreira M.A.M."/>
            <person name="Nascimento F.F."/>
            <person name="Nicolas M.F."/>
            <person name="Oliveira J.G."/>
            <person name="Oliveira S.C."/>
            <person name="Paixao R.F.C."/>
            <person name="Parente J.A."/>
            <person name="Pedrosa F.O."/>
            <person name="Pena S.D.J."/>
            <person name="Pereira J.O."/>
            <person name="Pereira M."/>
            <person name="Pinto L.S.R.C."/>
            <person name="Pinto L.S."/>
            <person name="Porto J.I.R."/>
            <person name="Potrich D.P."/>
            <person name="Ramalho-Neto C.E."/>
            <person name="Reis A.M.M."/>
            <person name="Rigo L.U."/>
            <person name="Rondinelli E."/>
            <person name="Santos E.B.P."/>
            <person name="Santos F.R."/>
            <person name="Schneider M.P.C."/>
            <person name="Seuanez H.N."/>
            <person name="Silva A.M.R."/>
            <person name="da Silva A.L.C."/>
            <person name="Silva D.W."/>
            <person name="Silva R."/>
            <person name="Simoes I.C."/>
            <person name="Simon D."/>
            <person name="Soares C.M.A."/>
            <person name="Soares R.B.A."/>
            <person name="Souza E.M."/>
            <person name="Souza K.R.L."/>
            <person name="Souza R.C."/>
            <person name="Steffens M.B.R."/>
            <person name="Steindel M."/>
            <person name="Teixeira S.R."/>
            <person name="Urmenyi T."/>
            <person name="Vettore A."/>
            <person name="Wassem R."/>
            <person name="Zaha A."/>
            <person name="Simpson A.J.G."/>
        </authorList>
    </citation>
    <scope>NUCLEOTIDE SEQUENCE [LARGE SCALE GENOMIC DNA]</scope>
    <source>
        <strain>ATCC 12472 / DSM 30191 / JCM 1249 / CCUG 213 / NBRC 12614 / NCIMB 9131 / NCTC 9757 / MK</strain>
    </source>
</reference>
<evidence type="ECO:0000255" key="1">
    <source>
        <dbReference type="HAMAP-Rule" id="MF_01855"/>
    </source>
</evidence>
<dbReference type="EC" id="3.1.3.11" evidence="1"/>
<dbReference type="EMBL" id="AE016825">
    <property type="protein sequence ID" value="AAQ60099.2"/>
    <property type="molecule type" value="Genomic_DNA"/>
</dbReference>
<dbReference type="RefSeq" id="WP_011135974.1">
    <property type="nucleotide sequence ID" value="NC_005085.1"/>
</dbReference>
<dbReference type="SMR" id="Q7NVB6"/>
<dbReference type="STRING" id="243365.CV_2427"/>
<dbReference type="GeneID" id="66368166"/>
<dbReference type="KEGG" id="cvi:CV_2427"/>
<dbReference type="eggNOG" id="COG0158">
    <property type="taxonomic scope" value="Bacteria"/>
</dbReference>
<dbReference type="HOGENOM" id="CLU_039977_0_0_4"/>
<dbReference type="OrthoDB" id="9806756at2"/>
<dbReference type="UniPathway" id="UPA00138"/>
<dbReference type="Proteomes" id="UP000001424">
    <property type="component" value="Chromosome"/>
</dbReference>
<dbReference type="GO" id="GO:0005829">
    <property type="term" value="C:cytosol"/>
    <property type="evidence" value="ECO:0007669"/>
    <property type="project" value="TreeGrafter"/>
</dbReference>
<dbReference type="GO" id="GO:0042132">
    <property type="term" value="F:fructose 1,6-bisphosphate 1-phosphatase activity"/>
    <property type="evidence" value="ECO:0007669"/>
    <property type="project" value="UniProtKB-UniRule"/>
</dbReference>
<dbReference type="GO" id="GO:0000287">
    <property type="term" value="F:magnesium ion binding"/>
    <property type="evidence" value="ECO:0007669"/>
    <property type="project" value="UniProtKB-UniRule"/>
</dbReference>
<dbReference type="GO" id="GO:0030388">
    <property type="term" value="P:fructose 1,6-bisphosphate metabolic process"/>
    <property type="evidence" value="ECO:0007669"/>
    <property type="project" value="TreeGrafter"/>
</dbReference>
<dbReference type="GO" id="GO:0006002">
    <property type="term" value="P:fructose 6-phosphate metabolic process"/>
    <property type="evidence" value="ECO:0007669"/>
    <property type="project" value="TreeGrafter"/>
</dbReference>
<dbReference type="GO" id="GO:0006000">
    <property type="term" value="P:fructose metabolic process"/>
    <property type="evidence" value="ECO:0007669"/>
    <property type="project" value="TreeGrafter"/>
</dbReference>
<dbReference type="GO" id="GO:0006094">
    <property type="term" value="P:gluconeogenesis"/>
    <property type="evidence" value="ECO:0007669"/>
    <property type="project" value="UniProtKB-UniRule"/>
</dbReference>
<dbReference type="GO" id="GO:0005986">
    <property type="term" value="P:sucrose biosynthetic process"/>
    <property type="evidence" value="ECO:0007669"/>
    <property type="project" value="TreeGrafter"/>
</dbReference>
<dbReference type="CDD" id="cd00354">
    <property type="entry name" value="FBPase"/>
    <property type="match status" value="1"/>
</dbReference>
<dbReference type="FunFam" id="3.30.540.10:FF:000006">
    <property type="entry name" value="Fructose-1,6-bisphosphatase class 1"/>
    <property type="match status" value="1"/>
</dbReference>
<dbReference type="FunFam" id="3.40.190.80:FF:000011">
    <property type="entry name" value="Fructose-1,6-bisphosphatase class 1"/>
    <property type="match status" value="1"/>
</dbReference>
<dbReference type="Gene3D" id="3.40.190.80">
    <property type="match status" value="1"/>
</dbReference>
<dbReference type="Gene3D" id="3.30.540.10">
    <property type="entry name" value="Fructose-1,6-Bisphosphatase, subunit A, domain 1"/>
    <property type="match status" value="1"/>
</dbReference>
<dbReference type="HAMAP" id="MF_01855">
    <property type="entry name" value="FBPase_class1"/>
    <property type="match status" value="1"/>
</dbReference>
<dbReference type="InterPro" id="IPR044015">
    <property type="entry name" value="FBPase_C_dom"/>
</dbReference>
<dbReference type="InterPro" id="IPR000146">
    <property type="entry name" value="FBPase_class-1"/>
</dbReference>
<dbReference type="InterPro" id="IPR033391">
    <property type="entry name" value="FBPase_N"/>
</dbReference>
<dbReference type="InterPro" id="IPR028343">
    <property type="entry name" value="FBPtase"/>
</dbReference>
<dbReference type="NCBIfam" id="NF006778">
    <property type="entry name" value="PRK09293.1-1"/>
    <property type="match status" value="1"/>
</dbReference>
<dbReference type="NCBIfam" id="NF006779">
    <property type="entry name" value="PRK09293.1-3"/>
    <property type="match status" value="1"/>
</dbReference>
<dbReference type="NCBIfam" id="NF006780">
    <property type="entry name" value="PRK09293.1-4"/>
    <property type="match status" value="1"/>
</dbReference>
<dbReference type="PANTHER" id="PTHR11556">
    <property type="entry name" value="FRUCTOSE-1,6-BISPHOSPHATASE-RELATED"/>
    <property type="match status" value="1"/>
</dbReference>
<dbReference type="PANTHER" id="PTHR11556:SF35">
    <property type="entry name" value="SEDOHEPTULOSE-1,7-BISPHOSPHATASE, CHLOROPLASTIC"/>
    <property type="match status" value="1"/>
</dbReference>
<dbReference type="Pfam" id="PF00316">
    <property type="entry name" value="FBPase"/>
    <property type="match status" value="1"/>
</dbReference>
<dbReference type="Pfam" id="PF18913">
    <property type="entry name" value="FBPase_C"/>
    <property type="match status" value="1"/>
</dbReference>
<dbReference type="PIRSF" id="PIRSF500210">
    <property type="entry name" value="FBPtase"/>
    <property type="match status" value="1"/>
</dbReference>
<dbReference type="PIRSF" id="PIRSF000904">
    <property type="entry name" value="FBPtase_SBPase"/>
    <property type="match status" value="1"/>
</dbReference>
<dbReference type="PRINTS" id="PR00115">
    <property type="entry name" value="F16BPHPHTASE"/>
</dbReference>
<dbReference type="SUPFAM" id="SSF56655">
    <property type="entry name" value="Carbohydrate phosphatase"/>
    <property type="match status" value="1"/>
</dbReference>
<accession>Q7NVB6</accession>
<comment type="catalytic activity">
    <reaction evidence="1">
        <text>beta-D-fructose 1,6-bisphosphate + H2O = beta-D-fructose 6-phosphate + phosphate</text>
        <dbReference type="Rhea" id="RHEA:11064"/>
        <dbReference type="ChEBI" id="CHEBI:15377"/>
        <dbReference type="ChEBI" id="CHEBI:32966"/>
        <dbReference type="ChEBI" id="CHEBI:43474"/>
        <dbReference type="ChEBI" id="CHEBI:57634"/>
        <dbReference type="EC" id="3.1.3.11"/>
    </reaction>
</comment>
<comment type="cofactor">
    <cofactor evidence="1">
        <name>Mg(2+)</name>
        <dbReference type="ChEBI" id="CHEBI:18420"/>
    </cofactor>
    <text evidence="1">Binds 2 magnesium ions per subunit.</text>
</comment>
<comment type="pathway">
    <text evidence="1">Carbohydrate biosynthesis; gluconeogenesis.</text>
</comment>
<comment type="subunit">
    <text evidence="1">Homotetramer.</text>
</comment>
<comment type="subcellular location">
    <subcellularLocation>
        <location evidence="1">Cytoplasm</location>
    </subcellularLocation>
</comment>
<comment type="similarity">
    <text evidence="1">Belongs to the FBPase class 1 family.</text>
</comment>